<sequence>MNDFSQPVIDSIHKPRDAANPRERYAAGVMKYREMGYWQPDYAPKDTDVIALFRITPQPGVDPEEAAAAVAGESSTATWTVVWTDRLTACDIYRAKAYRVDPVPASNAAEPQYFAYIAYELDLFEEGSVANLTASIIGNVFGFKPLKALRLEDMRIPVAYLKTFQGPPTGIVVERERLDKYGRPLLGATVKPKLGLSGKNYGRVVYEGLRGGLDFLKDDENINSQAFMHWRDRFLFAMEAVNRAQAETGEVKGHYLNVTAGTMEDMYERAEFAKELGSCIVMIDLVIGWTAIQSMARWARRNDMILHLHRAGHSTYTRQRNHGISFRVIAKWLRMAGVDHAHAGTAVGKLEGDPLSVQGYYNVCRESHNEVDLSRGIFFDQPWAGLRKVMPVASGGIHAGQMHQLLDLFGDDAILQFGGGTIGHPAGIQAGAVANRVALEAMVKARNEGRDIVHEGPDILEAAARWCTPLKQALDTWRDVTFNYASTDTPDFAATPTAA</sequence>
<gene>
    <name evidence="1" type="primary">cbbL</name>
    <name type="ordered locus">Bxeno_B0570</name>
    <name type="ORF">Bxe_B2453</name>
</gene>
<protein>
    <recommendedName>
        <fullName evidence="1">Ribulose bisphosphate carboxylase large chain</fullName>
        <shortName evidence="1">RuBisCO large subunit</shortName>
        <ecNumber evidence="1">4.1.1.39</ecNumber>
    </recommendedName>
</protein>
<organism>
    <name type="scientific">Paraburkholderia xenovorans (strain LB400)</name>
    <dbReference type="NCBI Taxonomy" id="266265"/>
    <lineage>
        <taxon>Bacteria</taxon>
        <taxon>Pseudomonadati</taxon>
        <taxon>Pseudomonadota</taxon>
        <taxon>Betaproteobacteria</taxon>
        <taxon>Burkholderiales</taxon>
        <taxon>Burkholderiaceae</taxon>
        <taxon>Paraburkholderia</taxon>
    </lineage>
</organism>
<dbReference type="EC" id="4.1.1.39" evidence="1"/>
<dbReference type="EMBL" id="CP000271">
    <property type="protein sequence ID" value="ABE33538.1"/>
    <property type="molecule type" value="Genomic_DNA"/>
</dbReference>
<dbReference type="RefSeq" id="WP_011490903.1">
    <property type="nucleotide sequence ID" value="NC_007952.1"/>
</dbReference>
<dbReference type="SMR" id="Q13QV1"/>
<dbReference type="STRING" id="266265.Bxe_B2453"/>
<dbReference type="KEGG" id="bxb:DR64_4781"/>
<dbReference type="KEGG" id="bxe:Bxe_B2453"/>
<dbReference type="PATRIC" id="fig|266265.5.peg.5256"/>
<dbReference type="eggNOG" id="COG1850">
    <property type="taxonomic scope" value="Bacteria"/>
</dbReference>
<dbReference type="OrthoDB" id="9770811at2"/>
<dbReference type="Proteomes" id="UP000001817">
    <property type="component" value="Chromosome 2"/>
</dbReference>
<dbReference type="GO" id="GO:0000287">
    <property type="term" value="F:magnesium ion binding"/>
    <property type="evidence" value="ECO:0007669"/>
    <property type="project" value="UniProtKB-UniRule"/>
</dbReference>
<dbReference type="GO" id="GO:0004497">
    <property type="term" value="F:monooxygenase activity"/>
    <property type="evidence" value="ECO:0007669"/>
    <property type="project" value="UniProtKB-KW"/>
</dbReference>
<dbReference type="GO" id="GO:0016984">
    <property type="term" value="F:ribulose-bisphosphate carboxylase activity"/>
    <property type="evidence" value="ECO:0007669"/>
    <property type="project" value="UniProtKB-UniRule"/>
</dbReference>
<dbReference type="GO" id="GO:0019253">
    <property type="term" value="P:reductive pentose-phosphate cycle"/>
    <property type="evidence" value="ECO:0007669"/>
    <property type="project" value="UniProtKB-UniRule"/>
</dbReference>
<dbReference type="CDD" id="cd08212">
    <property type="entry name" value="RuBisCO_large_I"/>
    <property type="match status" value="1"/>
</dbReference>
<dbReference type="Gene3D" id="3.20.20.110">
    <property type="entry name" value="Ribulose bisphosphate carboxylase, large subunit, C-terminal domain"/>
    <property type="match status" value="1"/>
</dbReference>
<dbReference type="Gene3D" id="3.30.70.150">
    <property type="entry name" value="RuBisCO large subunit, N-terminal domain"/>
    <property type="match status" value="1"/>
</dbReference>
<dbReference type="HAMAP" id="MF_01338">
    <property type="entry name" value="RuBisCO_L_type1"/>
    <property type="match status" value="1"/>
</dbReference>
<dbReference type="InterPro" id="IPR033966">
    <property type="entry name" value="RuBisCO"/>
</dbReference>
<dbReference type="InterPro" id="IPR020878">
    <property type="entry name" value="RuBisCo_large_chain_AS"/>
</dbReference>
<dbReference type="InterPro" id="IPR000685">
    <property type="entry name" value="RuBisCO_lsu_C"/>
</dbReference>
<dbReference type="InterPro" id="IPR036376">
    <property type="entry name" value="RuBisCO_lsu_C_sf"/>
</dbReference>
<dbReference type="InterPro" id="IPR017443">
    <property type="entry name" value="RuBisCO_lsu_fd_N"/>
</dbReference>
<dbReference type="InterPro" id="IPR036422">
    <property type="entry name" value="RuBisCO_lsu_N_sf"/>
</dbReference>
<dbReference type="InterPro" id="IPR020888">
    <property type="entry name" value="RuBisCO_lsuI"/>
</dbReference>
<dbReference type="NCBIfam" id="NF003252">
    <property type="entry name" value="PRK04208.1"/>
    <property type="match status" value="1"/>
</dbReference>
<dbReference type="PANTHER" id="PTHR42704">
    <property type="entry name" value="RIBULOSE BISPHOSPHATE CARBOXYLASE"/>
    <property type="match status" value="1"/>
</dbReference>
<dbReference type="PANTHER" id="PTHR42704:SF17">
    <property type="entry name" value="RIBULOSE BISPHOSPHATE CARBOXYLASE LARGE CHAIN"/>
    <property type="match status" value="1"/>
</dbReference>
<dbReference type="Pfam" id="PF00016">
    <property type="entry name" value="RuBisCO_large"/>
    <property type="match status" value="1"/>
</dbReference>
<dbReference type="Pfam" id="PF02788">
    <property type="entry name" value="RuBisCO_large_N"/>
    <property type="match status" value="1"/>
</dbReference>
<dbReference type="SFLD" id="SFLDG01052">
    <property type="entry name" value="RuBisCO"/>
    <property type="match status" value="1"/>
</dbReference>
<dbReference type="SFLD" id="SFLDS00014">
    <property type="entry name" value="RuBisCO"/>
    <property type="match status" value="1"/>
</dbReference>
<dbReference type="SFLD" id="SFLDG00301">
    <property type="entry name" value="RuBisCO-like_proteins"/>
    <property type="match status" value="1"/>
</dbReference>
<dbReference type="SUPFAM" id="SSF51649">
    <property type="entry name" value="RuBisCo, C-terminal domain"/>
    <property type="match status" value="1"/>
</dbReference>
<dbReference type="SUPFAM" id="SSF54966">
    <property type="entry name" value="RuBisCO, large subunit, small (N-terminal) domain"/>
    <property type="match status" value="1"/>
</dbReference>
<dbReference type="PROSITE" id="PS00157">
    <property type="entry name" value="RUBISCO_LARGE"/>
    <property type="match status" value="1"/>
</dbReference>
<evidence type="ECO:0000255" key="1">
    <source>
        <dbReference type="HAMAP-Rule" id="MF_01338"/>
    </source>
</evidence>
<comment type="function">
    <text evidence="1">RuBisCO catalyzes two reactions: the carboxylation of D-ribulose 1,5-bisphosphate, the primary event in carbon dioxide fixation, as well as the oxidative fragmentation of the pentose substrate. Both reactions occur simultaneously and in competition at the same active site.</text>
</comment>
<comment type="catalytic activity">
    <reaction evidence="1">
        <text>2 (2R)-3-phosphoglycerate + 2 H(+) = D-ribulose 1,5-bisphosphate + CO2 + H2O</text>
        <dbReference type="Rhea" id="RHEA:23124"/>
        <dbReference type="ChEBI" id="CHEBI:15377"/>
        <dbReference type="ChEBI" id="CHEBI:15378"/>
        <dbReference type="ChEBI" id="CHEBI:16526"/>
        <dbReference type="ChEBI" id="CHEBI:57870"/>
        <dbReference type="ChEBI" id="CHEBI:58272"/>
        <dbReference type="EC" id="4.1.1.39"/>
    </reaction>
</comment>
<comment type="catalytic activity">
    <reaction evidence="1">
        <text>D-ribulose 1,5-bisphosphate + O2 = 2-phosphoglycolate + (2R)-3-phosphoglycerate + 2 H(+)</text>
        <dbReference type="Rhea" id="RHEA:36631"/>
        <dbReference type="ChEBI" id="CHEBI:15378"/>
        <dbReference type="ChEBI" id="CHEBI:15379"/>
        <dbReference type="ChEBI" id="CHEBI:57870"/>
        <dbReference type="ChEBI" id="CHEBI:58033"/>
        <dbReference type="ChEBI" id="CHEBI:58272"/>
    </reaction>
</comment>
<comment type="cofactor">
    <cofactor evidence="1">
        <name>Mg(2+)</name>
        <dbReference type="ChEBI" id="CHEBI:18420"/>
    </cofactor>
    <text evidence="1">Binds 1 Mg(2+) ion per subunit.</text>
</comment>
<comment type="subunit">
    <text evidence="1">Heterohexadecamer of 8 large chains and 8 small chains.</text>
</comment>
<comment type="miscellaneous">
    <text evidence="1">The basic functional RuBisCO is composed of a large chain homodimer in a 'head-to-tail' conformation. In form I RuBisCO this homodimer is arranged in a barrel-like tetramer with the small subunits forming a tetrameric 'cap' on each end of the 'barrel'.</text>
</comment>
<comment type="similarity">
    <text evidence="1">Belongs to the RuBisCO large chain family. Type I subfamily.</text>
</comment>
<accession>Q13QV1</accession>
<reference key="1">
    <citation type="journal article" date="2006" name="Proc. Natl. Acad. Sci. U.S.A.">
        <title>Burkholderia xenovorans LB400 harbors a multi-replicon, 9.73-Mbp genome shaped for versatility.</title>
        <authorList>
            <person name="Chain P.S.G."/>
            <person name="Denef V.J."/>
            <person name="Konstantinidis K.T."/>
            <person name="Vergez L.M."/>
            <person name="Agullo L."/>
            <person name="Reyes V.L."/>
            <person name="Hauser L."/>
            <person name="Cordova M."/>
            <person name="Gomez L."/>
            <person name="Gonzalez M."/>
            <person name="Land M."/>
            <person name="Lao V."/>
            <person name="Larimer F."/>
            <person name="LiPuma J.J."/>
            <person name="Mahenthiralingam E."/>
            <person name="Malfatti S.A."/>
            <person name="Marx C.J."/>
            <person name="Parnell J.J."/>
            <person name="Ramette A."/>
            <person name="Richardson P."/>
            <person name="Seeger M."/>
            <person name="Smith D."/>
            <person name="Spilker T."/>
            <person name="Sul W.J."/>
            <person name="Tsoi T.V."/>
            <person name="Ulrich L.E."/>
            <person name="Zhulin I.B."/>
            <person name="Tiedje J.M."/>
        </authorList>
    </citation>
    <scope>NUCLEOTIDE SEQUENCE [LARGE SCALE GENOMIC DNA]</scope>
    <source>
        <strain>LB400</strain>
    </source>
</reference>
<feature type="chain" id="PRO_0000251445" description="Ribulose bisphosphate carboxylase large chain">
    <location>
        <begin position="1"/>
        <end position="499"/>
    </location>
</feature>
<feature type="active site" description="Proton acceptor" evidence="1">
    <location>
        <position position="191"/>
    </location>
</feature>
<feature type="active site" description="Proton acceptor" evidence="1">
    <location>
        <position position="309"/>
    </location>
</feature>
<feature type="binding site" description="in homodimeric partner" evidence="1">
    <location>
        <position position="139"/>
    </location>
    <ligand>
        <name>substrate</name>
    </ligand>
</feature>
<feature type="binding site" evidence="1">
    <location>
        <position position="189"/>
    </location>
    <ligand>
        <name>substrate</name>
    </ligand>
</feature>
<feature type="binding site" evidence="1">
    <location>
        <position position="193"/>
    </location>
    <ligand>
        <name>substrate</name>
    </ligand>
</feature>
<feature type="binding site" description="via carbamate group" evidence="1">
    <location>
        <position position="217"/>
    </location>
    <ligand>
        <name>Mg(2+)</name>
        <dbReference type="ChEBI" id="CHEBI:18420"/>
    </ligand>
</feature>
<feature type="binding site" evidence="1">
    <location>
        <position position="219"/>
    </location>
    <ligand>
        <name>Mg(2+)</name>
        <dbReference type="ChEBI" id="CHEBI:18420"/>
    </ligand>
</feature>
<feature type="binding site" evidence="1">
    <location>
        <position position="220"/>
    </location>
    <ligand>
        <name>Mg(2+)</name>
        <dbReference type="ChEBI" id="CHEBI:18420"/>
    </ligand>
</feature>
<feature type="binding site" evidence="1">
    <location>
        <position position="310"/>
    </location>
    <ligand>
        <name>substrate</name>
    </ligand>
</feature>
<feature type="binding site" evidence="1">
    <location>
        <position position="342"/>
    </location>
    <ligand>
        <name>substrate</name>
    </ligand>
</feature>
<feature type="binding site" evidence="1">
    <location>
        <position position="394"/>
    </location>
    <ligand>
        <name>substrate</name>
    </ligand>
</feature>
<feature type="site" description="Transition state stabilizer" evidence="1">
    <location>
        <position position="349"/>
    </location>
</feature>
<feature type="modified residue" description="N6-carboxylysine" evidence="1">
    <location>
        <position position="217"/>
    </location>
</feature>
<proteinExistence type="inferred from homology"/>
<keyword id="KW-0113">Calvin cycle</keyword>
<keyword id="KW-0120">Carbon dioxide fixation</keyword>
<keyword id="KW-0456">Lyase</keyword>
<keyword id="KW-0460">Magnesium</keyword>
<keyword id="KW-0479">Metal-binding</keyword>
<keyword id="KW-0503">Monooxygenase</keyword>
<keyword id="KW-0560">Oxidoreductase</keyword>
<keyword id="KW-1185">Reference proteome</keyword>
<name>RBL_PARXL</name>